<feature type="transit peptide" description="Mitochondrion">
    <location>
        <begin position="1"/>
        <end position="43"/>
    </location>
</feature>
<feature type="chain" id="PRO_0000007461" description="Elongation factor Tu, mitochondrial">
    <location>
        <begin position="44"/>
        <end position="452"/>
    </location>
</feature>
<feature type="domain" description="tr-type G" evidence="4">
    <location>
        <begin position="55"/>
        <end position="251"/>
    </location>
</feature>
<feature type="region of interest" description="G1" evidence="4">
    <location>
        <begin position="64"/>
        <end position="71"/>
    </location>
</feature>
<feature type="region of interest" description="G2" evidence="4">
    <location>
        <begin position="105"/>
        <end position="109"/>
    </location>
</feature>
<feature type="region of interest" description="G3" evidence="4">
    <location>
        <begin position="126"/>
        <end position="129"/>
    </location>
</feature>
<feature type="region of interest" description="G4" evidence="4">
    <location>
        <begin position="181"/>
        <end position="184"/>
    </location>
</feature>
<feature type="region of interest" description="G5" evidence="4">
    <location>
        <begin position="219"/>
        <end position="221"/>
    </location>
</feature>
<feature type="binding site" evidence="1">
    <location>
        <position position="67"/>
    </location>
    <ligand>
        <name>GTP</name>
        <dbReference type="ChEBI" id="CHEBI:37565"/>
    </ligand>
</feature>
<feature type="binding site" evidence="1">
    <location>
        <position position="69"/>
    </location>
    <ligand>
        <name>GTP</name>
        <dbReference type="ChEBI" id="CHEBI:37565"/>
    </ligand>
</feature>
<feature type="binding site" evidence="1">
    <location>
        <position position="70"/>
    </location>
    <ligand>
        <name>GTP</name>
        <dbReference type="ChEBI" id="CHEBI:37565"/>
    </ligand>
</feature>
<feature type="binding site" evidence="1">
    <location>
        <position position="71"/>
    </location>
    <ligand>
        <name>GTP</name>
        <dbReference type="ChEBI" id="CHEBI:37565"/>
    </ligand>
</feature>
<feature type="binding site" evidence="1">
    <location>
        <position position="71"/>
    </location>
    <ligand>
        <name>Mg(2+)</name>
        <dbReference type="ChEBI" id="CHEBI:18420"/>
    </ligand>
</feature>
<feature type="binding site" evidence="1">
    <location>
        <position position="72"/>
    </location>
    <ligand>
        <name>GTP</name>
        <dbReference type="ChEBI" id="CHEBI:37565"/>
    </ligand>
</feature>
<feature type="binding site" evidence="1">
    <location>
        <position position="181"/>
    </location>
    <ligand>
        <name>GTP</name>
        <dbReference type="ChEBI" id="CHEBI:37565"/>
    </ligand>
</feature>
<feature type="binding site" evidence="1">
    <location>
        <position position="184"/>
    </location>
    <ligand>
        <name>GTP</name>
        <dbReference type="ChEBI" id="CHEBI:37565"/>
    </ligand>
</feature>
<feature type="binding site" evidence="1">
    <location>
        <position position="219"/>
    </location>
    <ligand>
        <name>GTP</name>
        <dbReference type="ChEBI" id="CHEBI:37565"/>
    </ligand>
</feature>
<feature type="binding site" evidence="1">
    <location>
        <position position="220"/>
    </location>
    <ligand>
        <name>GTP</name>
        <dbReference type="ChEBI" id="CHEBI:37565"/>
    </ligand>
</feature>
<feature type="binding site" evidence="1">
    <location>
        <position position="221"/>
    </location>
    <ligand>
        <name>GTP</name>
        <dbReference type="ChEBI" id="CHEBI:37565"/>
    </ligand>
</feature>
<feature type="modified residue" description="N6-acetyllysine" evidence="2">
    <location>
        <position position="79"/>
    </location>
</feature>
<feature type="modified residue" description="N6-acetyllysine; alternate" evidence="2">
    <location>
        <position position="88"/>
    </location>
</feature>
<feature type="modified residue" description="N6-succinyllysine; alternate" evidence="3">
    <location>
        <position position="88"/>
    </location>
</feature>
<feature type="modified residue" description="N6-succinyllysine" evidence="3">
    <location>
        <position position="234"/>
    </location>
</feature>
<feature type="modified residue" description="N6-acetyllysine" evidence="2">
    <location>
        <position position="256"/>
    </location>
</feature>
<feature type="modified residue" description="Phosphothreonine" evidence="2">
    <location>
        <position position="278"/>
    </location>
</feature>
<feature type="modified residue" description="N6-succinyllysine" evidence="3">
    <location>
        <position position="286"/>
    </location>
</feature>
<feature type="modified residue" description="Phosphoserine" evidence="3">
    <location>
        <position position="312"/>
    </location>
</feature>
<feature type="modified residue" description="N6-acetyllysine" evidence="3">
    <location>
        <position position="361"/>
    </location>
</feature>
<feature type="modified residue" description="N6-acetyllysine" evidence="2">
    <location>
        <position position="418"/>
    </location>
</feature>
<feature type="sequence variant">
    <original>L</original>
    <variation>P</variation>
    <location>
        <position position="27"/>
    </location>
</feature>
<feature type="sequence variant">
    <original>Q</original>
    <variation>H</variation>
    <location>
        <position position="355"/>
    </location>
</feature>
<feature type="strand" evidence="5">
    <location>
        <begin position="57"/>
        <end position="65"/>
    </location>
</feature>
<feature type="helix" evidence="6">
    <location>
        <begin position="66"/>
        <end position="68"/>
    </location>
</feature>
<feature type="helix" evidence="5">
    <location>
        <begin position="70"/>
        <end position="83"/>
    </location>
</feature>
<feature type="helix" evidence="5">
    <location>
        <begin position="92"/>
        <end position="96"/>
    </location>
</feature>
<feature type="strand" evidence="5">
    <location>
        <begin position="100"/>
        <end position="103"/>
    </location>
</feature>
<feature type="strand" evidence="5">
    <location>
        <begin position="106"/>
        <end position="109"/>
    </location>
</feature>
<feature type="strand" evidence="5">
    <location>
        <begin position="111"/>
        <end position="116"/>
    </location>
</feature>
<feature type="strand" evidence="5">
    <location>
        <begin position="121"/>
        <end position="126"/>
    </location>
</feature>
<feature type="helix" evidence="5">
    <location>
        <begin position="130"/>
        <end position="139"/>
    </location>
</feature>
<feature type="strand" evidence="5">
    <location>
        <begin position="145"/>
        <end position="152"/>
    </location>
</feature>
<feature type="turn" evidence="5">
    <location>
        <begin position="153"/>
        <end position="155"/>
    </location>
</feature>
<feature type="helix" evidence="5">
    <location>
        <begin position="159"/>
        <end position="170"/>
    </location>
</feature>
<feature type="strand" evidence="5">
    <location>
        <begin position="176"/>
        <end position="181"/>
    </location>
</feature>
<feature type="helix" evidence="5">
    <location>
        <begin position="183"/>
        <end position="185"/>
    </location>
</feature>
<feature type="helix" evidence="5">
    <location>
        <begin position="189"/>
        <end position="205"/>
    </location>
</feature>
<feature type="turn" evidence="5">
    <location>
        <begin position="210"/>
        <end position="212"/>
    </location>
</feature>
<feature type="strand" evidence="5">
    <location>
        <begin position="215"/>
        <end position="217"/>
    </location>
</feature>
<feature type="helix" evidence="5">
    <location>
        <begin position="220"/>
        <end position="224"/>
    </location>
</feature>
<feature type="turn" evidence="5">
    <location>
        <begin position="229"/>
        <end position="232"/>
    </location>
</feature>
<feature type="helix" evidence="5">
    <location>
        <begin position="233"/>
        <end position="246"/>
    </location>
</feature>
<feature type="strand" evidence="5">
    <location>
        <begin position="259"/>
        <end position="261"/>
    </location>
</feature>
<feature type="strand" evidence="5">
    <location>
        <begin position="264"/>
        <end position="268"/>
    </location>
</feature>
<feature type="turn" evidence="5">
    <location>
        <begin position="269"/>
        <end position="271"/>
    </location>
</feature>
<feature type="strand" evidence="5">
    <location>
        <begin position="272"/>
        <end position="278"/>
    </location>
</feature>
<feature type="strand" evidence="5">
    <location>
        <begin position="281"/>
        <end position="285"/>
    </location>
</feature>
<feature type="strand" evidence="5">
    <location>
        <begin position="289"/>
        <end position="294"/>
    </location>
</feature>
<feature type="strand" evidence="5">
    <location>
        <begin position="297"/>
        <end position="308"/>
    </location>
</feature>
<feature type="strand" evidence="5">
    <location>
        <begin position="311"/>
        <end position="317"/>
    </location>
</feature>
<feature type="strand" evidence="5">
    <location>
        <begin position="321"/>
        <end position="328"/>
    </location>
</feature>
<feature type="helix" evidence="5">
    <location>
        <begin position="331"/>
        <end position="333"/>
    </location>
</feature>
<feature type="strand" evidence="5">
    <location>
        <begin position="339"/>
        <end position="342"/>
    </location>
</feature>
<feature type="strand" evidence="5">
    <location>
        <begin position="349"/>
        <end position="358"/>
    </location>
</feature>
<feature type="helix" evidence="5">
    <location>
        <begin position="361"/>
        <end position="363"/>
    </location>
</feature>
<feature type="strand" evidence="5">
    <location>
        <begin position="377"/>
        <end position="380"/>
    </location>
</feature>
<feature type="strand" evidence="5">
    <location>
        <begin position="383"/>
        <end position="390"/>
    </location>
</feature>
<feature type="strand" evidence="5">
    <location>
        <begin position="403"/>
        <end position="414"/>
    </location>
</feature>
<feature type="strand" evidence="5">
    <location>
        <begin position="421"/>
        <end position="426"/>
    </location>
</feature>
<feature type="strand" evidence="5">
    <location>
        <begin position="429"/>
        <end position="438"/>
    </location>
</feature>
<feature type="helix" evidence="5">
    <location>
        <begin position="444"/>
        <end position="447"/>
    </location>
</feature>
<gene>
    <name type="primary">TUFM</name>
</gene>
<comment type="function">
    <text evidence="2">GTP hydrolase that promotes the GTP-dependent binding of aminoacyl-tRNA to the A-site of ribosomes during protein biosynthesis. Also plays a role in the regulation of autophagy and innate immunity. Recruits ATG5-ATG12 and NLRX1 at mitochondria and serves as a checkpoint of the RIGI-MAVS pathway. In turn, inhibits RLR-mediated type I interferon while promoting autophagy.</text>
</comment>
<comment type="catalytic activity">
    <reaction evidence="1">
        <text>GTP + H2O = GDP + phosphate + H(+)</text>
        <dbReference type="Rhea" id="RHEA:19669"/>
        <dbReference type="ChEBI" id="CHEBI:15377"/>
        <dbReference type="ChEBI" id="CHEBI:15378"/>
        <dbReference type="ChEBI" id="CHEBI:37565"/>
        <dbReference type="ChEBI" id="CHEBI:43474"/>
        <dbReference type="ChEBI" id="CHEBI:58189"/>
        <dbReference type="EC" id="3.6.5.3"/>
    </reaction>
    <physiologicalReaction direction="left-to-right" evidence="1">
        <dbReference type="Rhea" id="RHEA:19670"/>
    </physiologicalReaction>
</comment>
<comment type="subunit">
    <text evidence="2">Interacts with NLRX1. Interacts with ATG16L1.</text>
</comment>
<comment type="subcellular location">
    <subcellularLocation>
        <location evidence="2">Mitochondrion</location>
    </subcellularLocation>
</comment>
<comment type="similarity">
    <text evidence="4">Belongs to the TRAFAC class translation factor GTPase superfamily. Classic translation factor GTPase family. EF-Tu/EF-1A subfamily.</text>
</comment>
<keyword id="KW-0002">3D-structure</keyword>
<keyword id="KW-0007">Acetylation</keyword>
<keyword id="KW-0903">Direct protein sequencing</keyword>
<keyword id="KW-0251">Elongation factor</keyword>
<keyword id="KW-0342">GTP-binding</keyword>
<keyword id="KW-0378">Hydrolase</keyword>
<keyword id="KW-0460">Magnesium</keyword>
<keyword id="KW-0479">Metal-binding</keyword>
<keyword id="KW-0496">Mitochondrion</keyword>
<keyword id="KW-0547">Nucleotide-binding</keyword>
<keyword id="KW-0597">Phosphoprotein</keyword>
<keyword id="KW-0648">Protein biosynthesis</keyword>
<keyword id="KW-1185">Reference proteome</keyword>
<keyword id="KW-0809">Transit peptide</keyword>
<protein>
    <recommendedName>
        <fullName>Elongation factor Tu, mitochondrial</fullName>
        <shortName>EF-Tu</shortName>
        <ecNumber evidence="1">3.6.5.3</ecNumber>
    </recommendedName>
</protein>
<dbReference type="EC" id="3.6.5.3" evidence="1"/>
<dbReference type="EMBL" id="L38996">
    <property type="protein sequence ID" value="AAB00500.1"/>
    <property type="molecule type" value="mRNA"/>
</dbReference>
<dbReference type="EMBL" id="BC120109">
    <property type="protein sequence ID" value="AAI20110.1"/>
    <property type="molecule type" value="mRNA"/>
</dbReference>
<dbReference type="PIR" id="S62768">
    <property type="entry name" value="S62768"/>
</dbReference>
<dbReference type="RefSeq" id="NP_776632.1">
    <property type="nucleotide sequence ID" value="NM_174207.2"/>
</dbReference>
<dbReference type="PDB" id="1D2E">
    <property type="method" value="X-ray"/>
    <property type="resolution" value="1.94 A"/>
    <property type="chains" value="A/B/C/D=55-451"/>
</dbReference>
<dbReference type="PDB" id="1XB2">
    <property type="method" value="X-ray"/>
    <property type="resolution" value="2.20 A"/>
    <property type="chains" value="A=44-452"/>
</dbReference>
<dbReference type="PDBsum" id="1D2E"/>
<dbReference type="PDBsum" id="1XB2"/>
<dbReference type="SMR" id="P49410"/>
<dbReference type="FunCoup" id="P49410">
    <property type="interactions" value="2094"/>
</dbReference>
<dbReference type="IntAct" id="P49410">
    <property type="interactions" value="1"/>
</dbReference>
<dbReference type="STRING" id="9913.ENSBTAP00000025586"/>
<dbReference type="iPTMnet" id="P49410"/>
<dbReference type="SwissPalm" id="P49410"/>
<dbReference type="PaxDb" id="9913-ENSBTAP00000025586"/>
<dbReference type="PeptideAtlas" id="P49410"/>
<dbReference type="GeneID" id="281556"/>
<dbReference type="KEGG" id="bta:281556"/>
<dbReference type="CTD" id="7284"/>
<dbReference type="VEuPathDB" id="HostDB:ENSBTAG00000019216"/>
<dbReference type="eggNOG" id="KOG0460">
    <property type="taxonomic scope" value="Eukaryota"/>
</dbReference>
<dbReference type="HOGENOM" id="CLU_007265_0_0_1"/>
<dbReference type="InParanoid" id="P49410"/>
<dbReference type="OMA" id="EGDKEWG"/>
<dbReference type="OrthoDB" id="2067at2759"/>
<dbReference type="TreeFam" id="TF300432"/>
<dbReference type="EvolutionaryTrace" id="P49410"/>
<dbReference type="Proteomes" id="UP000009136">
    <property type="component" value="Chromosome 25"/>
</dbReference>
<dbReference type="Bgee" id="ENSBTAG00000019216">
    <property type="expression patterns" value="Expressed in digestive system secreted substance and 107 other cell types or tissues"/>
</dbReference>
<dbReference type="GO" id="GO:0005743">
    <property type="term" value="C:mitochondrial inner membrane"/>
    <property type="evidence" value="ECO:0000250"/>
    <property type="project" value="AgBase"/>
</dbReference>
<dbReference type="GO" id="GO:0005759">
    <property type="term" value="C:mitochondrial matrix"/>
    <property type="evidence" value="ECO:0000304"/>
    <property type="project" value="Reactome"/>
</dbReference>
<dbReference type="GO" id="GO:0005739">
    <property type="term" value="C:mitochondrion"/>
    <property type="evidence" value="ECO:0000314"/>
    <property type="project" value="UniProtKB"/>
</dbReference>
<dbReference type="GO" id="GO:0005525">
    <property type="term" value="F:GTP binding"/>
    <property type="evidence" value="ECO:0000250"/>
    <property type="project" value="UniProtKB"/>
</dbReference>
<dbReference type="GO" id="GO:0003924">
    <property type="term" value="F:GTPase activity"/>
    <property type="evidence" value="ECO:0000250"/>
    <property type="project" value="UniProtKB"/>
</dbReference>
<dbReference type="GO" id="GO:0000287">
    <property type="term" value="F:magnesium ion binding"/>
    <property type="evidence" value="ECO:0000250"/>
    <property type="project" value="UniProtKB"/>
</dbReference>
<dbReference type="GO" id="GO:0003746">
    <property type="term" value="F:translation elongation factor activity"/>
    <property type="evidence" value="ECO:0000314"/>
    <property type="project" value="UniProtKB"/>
</dbReference>
<dbReference type="GO" id="GO:0070125">
    <property type="term" value="P:mitochondrial translational elongation"/>
    <property type="evidence" value="ECO:0000318"/>
    <property type="project" value="GO_Central"/>
</dbReference>
<dbReference type="GO" id="GO:0006414">
    <property type="term" value="P:translational elongation"/>
    <property type="evidence" value="ECO:0000314"/>
    <property type="project" value="UniProtKB"/>
</dbReference>
<dbReference type="CDD" id="cd01884">
    <property type="entry name" value="EF_Tu"/>
    <property type="match status" value="1"/>
</dbReference>
<dbReference type="CDD" id="cd03697">
    <property type="entry name" value="EFTU_II"/>
    <property type="match status" value="1"/>
</dbReference>
<dbReference type="CDD" id="cd03706">
    <property type="entry name" value="mtEFTU_III"/>
    <property type="match status" value="1"/>
</dbReference>
<dbReference type="FunFam" id="2.40.30.10:FF:000068">
    <property type="entry name" value="Elongation factor Tu"/>
    <property type="match status" value="1"/>
</dbReference>
<dbReference type="FunFam" id="2.40.30.10:FF:000071">
    <property type="entry name" value="Elongation factor Tu"/>
    <property type="match status" value="1"/>
</dbReference>
<dbReference type="FunFam" id="3.40.50.300:FF:000003">
    <property type="entry name" value="Elongation factor Tu"/>
    <property type="match status" value="1"/>
</dbReference>
<dbReference type="Gene3D" id="3.40.50.300">
    <property type="entry name" value="P-loop containing nucleotide triphosphate hydrolases"/>
    <property type="match status" value="1"/>
</dbReference>
<dbReference type="Gene3D" id="2.40.30.10">
    <property type="entry name" value="Translation factors"/>
    <property type="match status" value="2"/>
</dbReference>
<dbReference type="InterPro" id="IPR041709">
    <property type="entry name" value="EF-Tu_GTP-bd"/>
</dbReference>
<dbReference type="InterPro" id="IPR050055">
    <property type="entry name" value="EF-Tu_GTPase"/>
</dbReference>
<dbReference type="InterPro" id="IPR004161">
    <property type="entry name" value="EFTu-like_2"/>
</dbReference>
<dbReference type="InterPro" id="IPR033720">
    <property type="entry name" value="EFTU_2"/>
</dbReference>
<dbReference type="InterPro" id="IPR031157">
    <property type="entry name" value="G_TR_CS"/>
</dbReference>
<dbReference type="InterPro" id="IPR027417">
    <property type="entry name" value="P-loop_NTPase"/>
</dbReference>
<dbReference type="InterPro" id="IPR000795">
    <property type="entry name" value="T_Tr_GTP-bd_dom"/>
</dbReference>
<dbReference type="InterPro" id="IPR009000">
    <property type="entry name" value="Transl_B-barrel_sf"/>
</dbReference>
<dbReference type="InterPro" id="IPR009001">
    <property type="entry name" value="Transl_elong_EF1A/Init_IF2_C"/>
</dbReference>
<dbReference type="InterPro" id="IPR004541">
    <property type="entry name" value="Transl_elong_EFTu/EF1A_bac/org"/>
</dbReference>
<dbReference type="InterPro" id="IPR004160">
    <property type="entry name" value="Transl_elong_EFTu/EF1A_C"/>
</dbReference>
<dbReference type="NCBIfam" id="TIGR00485">
    <property type="entry name" value="EF-Tu"/>
    <property type="match status" value="1"/>
</dbReference>
<dbReference type="NCBIfam" id="NF000766">
    <property type="entry name" value="PRK00049.1"/>
    <property type="match status" value="1"/>
</dbReference>
<dbReference type="NCBIfam" id="NF009372">
    <property type="entry name" value="PRK12735.1"/>
    <property type="match status" value="1"/>
</dbReference>
<dbReference type="NCBIfam" id="NF009373">
    <property type="entry name" value="PRK12736.1"/>
    <property type="match status" value="1"/>
</dbReference>
<dbReference type="PANTHER" id="PTHR43721:SF36">
    <property type="entry name" value="ELONGATION FACTOR TU, MITOCHONDRIAL"/>
    <property type="match status" value="1"/>
</dbReference>
<dbReference type="PANTHER" id="PTHR43721">
    <property type="entry name" value="ELONGATION FACTOR TU-RELATED"/>
    <property type="match status" value="1"/>
</dbReference>
<dbReference type="Pfam" id="PF00009">
    <property type="entry name" value="GTP_EFTU"/>
    <property type="match status" value="1"/>
</dbReference>
<dbReference type="Pfam" id="PF03144">
    <property type="entry name" value="GTP_EFTU_D2"/>
    <property type="match status" value="1"/>
</dbReference>
<dbReference type="Pfam" id="PF03143">
    <property type="entry name" value="GTP_EFTU_D3"/>
    <property type="match status" value="1"/>
</dbReference>
<dbReference type="PRINTS" id="PR00315">
    <property type="entry name" value="ELONGATNFCT"/>
</dbReference>
<dbReference type="SUPFAM" id="SSF50465">
    <property type="entry name" value="EF-Tu/eEF-1alpha/eIF2-gamma C-terminal domain"/>
    <property type="match status" value="1"/>
</dbReference>
<dbReference type="SUPFAM" id="SSF52540">
    <property type="entry name" value="P-loop containing nucleoside triphosphate hydrolases"/>
    <property type="match status" value="1"/>
</dbReference>
<dbReference type="SUPFAM" id="SSF50447">
    <property type="entry name" value="Translation proteins"/>
    <property type="match status" value="1"/>
</dbReference>
<dbReference type="PROSITE" id="PS00301">
    <property type="entry name" value="G_TR_1"/>
    <property type="match status" value="1"/>
</dbReference>
<dbReference type="PROSITE" id="PS51722">
    <property type="entry name" value="G_TR_2"/>
    <property type="match status" value="1"/>
</dbReference>
<accession>P49410</accession>
<accession>Q0VCL4</accession>
<proteinExistence type="evidence at protein level"/>
<organism>
    <name type="scientific">Bos taurus</name>
    <name type="common">Bovine</name>
    <dbReference type="NCBI Taxonomy" id="9913"/>
    <lineage>
        <taxon>Eukaryota</taxon>
        <taxon>Metazoa</taxon>
        <taxon>Chordata</taxon>
        <taxon>Craniata</taxon>
        <taxon>Vertebrata</taxon>
        <taxon>Euteleostomi</taxon>
        <taxon>Mammalia</taxon>
        <taxon>Eutheria</taxon>
        <taxon>Laurasiatheria</taxon>
        <taxon>Artiodactyla</taxon>
        <taxon>Ruminantia</taxon>
        <taxon>Pecora</taxon>
        <taxon>Bovidae</taxon>
        <taxon>Bovinae</taxon>
        <taxon>Bos</taxon>
    </lineage>
</organism>
<name>EFTU_BOVIN</name>
<sequence length="452" mass="49398">MAAATLLRATPLFSGLGAGPAPLLQGLLRPLKAQALPVLCRGLAVEAKKTYVRDKPHVNVGTIGHVDHGKTTLTAAITKILAEGGGAKFKKYEEIDNAPEERARGITINAAHVEYSTAARHYAHTDCPGHADYVKNMITGTAPLDGCILVVAANDGPMPQTREHLLLARQIGVEHVVVYVNKADAVQDSEMVELVELEIRELLTEFGYKGEETPIIVGSALCALEQRDPELGLKSVQKLLDAVDTYIPVPTRDLEKPFLLPVESVYSIPGRGTVVTGTLERGILKKGDECEFLGHSKNIRTVVTGIEMFHKSLDRAEAGDNLGALVRGLKREDLRRGLVMAKPGSIQPHQKVEAQVYILTKEEGGRHKPFVSHFMPVMFSLTWDMACRIILPPGKELAMPGEDLKLTLILRQPMILEKGQRFTLRDGNRTIGTGLVTDTPAMTEEDKNIKWS</sequence>
<reference key="1">
    <citation type="journal article" date="1995" name="Biochim. Biophys. Acta">
        <title>Cloning, sequence analysis and expression of mammalian mitochondrial protein synthesis elongation factor Tu.</title>
        <authorList>
            <person name="Woriax V.L."/>
            <person name="Burkhart W.A."/>
            <person name="Spremulli L.L."/>
        </authorList>
    </citation>
    <scope>NUCLEOTIDE SEQUENCE [MRNA]</scope>
    <scope>PARTIAL PROTEIN SEQUENCE</scope>
    <source>
        <tissue>Liver</tissue>
    </source>
</reference>
<reference key="2">
    <citation type="submission" date="2006-08" db="EMBL/GenBank/DDBJ databases">
        <authorList>
            <consortium name="NIH - Mammalian Gene Collection (MGC) project"/>
        </authorList>
    </citation>
    <scope>NUCLEOTIDE SEQUENCE [LARGE SCALE MRNA]</scope>
    <source>
        <strain>Hereford</strain>
        <tissue>Fetal pons</tissue>
    </source>
</reference>
<reference key="3">
    <citation type="journal article" date="2000" name="J. Mol. Biol.">
        <title>High resolution crystal structure of bovine mitochondrial EF-Tu in complex with GDP.</title>
        <authorList>
            <person name="Andersen G.R."/>
            <person name="Thirup S."/>
            <person name="Spremulli L.L."/>
            <person name="Nyborg J."/>
        </authorList>
    </citation>
    <scope>X-RAY CRYSTALLOGRAPHY (1.94 ANGSTROMS)</scope>
</reference>
<reference key="4">
    <citation type="journal article" date="2005" name="J. Biol. Chem.">
        <title>Crystal structure of the bovine mitochondrial elongation factor Tu.Ts complex.</title>
        <authorList>
            <person name="Jeppesen M.G."/>
            <person name="Navratil T."/>
            <person name="Spremulli L.L."/>
            <person name="Nyborg J."/>
        </authorList>
    </citation>
    <scope>X-RAY CRYSTALLOGRAPHY (2.2 ANGSTROMS) IN COMPLEX WITH TSFM</scope>
</reference>
<evidence type="ECO:0000250" key="1">
    <source>
        <dbReference type="UniProtKB" id="P0CE47"/>
    </source>
</evidence>
<evidence type="ECO:0000250" key="2">
    <source>
        <dbReference type="UniProtKB" id="P49411"/>
    </source>
</evidence>
<evidence type="ECO:0000250" key="3">
    <source>
        <dbReference type="UniProtKB" id="Q8BFR5"/>
    </source>
</evidence>
<evidence type="ECO:0000255" key="4">
    <source>
        <dbReference type="PROSITE-ProRule" id="PRU01059"/>
    </source>
</evidence>
<evidence type="ECO:0007829" key="5">
    <source>
        <dbReference type="PDB" id="1D2E"/>
    </source>
</evidence>
<evidence type="ECO:0007829" key="6">
    <source>
        <dbReference type="PDB" id="1XB2"/>
    </source>
</evidence>